<gene>
    <name evidence="1" type="primary">ndoC</name>
    <name type="synonym">ndoC3</name>
</gene>
<keyword id="KW-0058">Aromatic hydrocarbons catabolism</keyword>
<keyword id="KW-0223">Dioxygenase</keyword>
<keyword id="KW-0560">Oxidoreductase</keyword>
<keyword id="KW-0614">Plasmid</keyword>
<reference key="1">
    <citation type="submission" date="1997-06" db="EMBL/GenBank/DDBJ databases">
        <title>Naphthalene dioxygenase genes from Pseudomonas fluorescens.</title>
        <authorList>
            <person name="Hamann C."/>
        </authorList>
    </citation>
    <scope>NUCLEOTIDE SEQUENCE [GENOMIC DNA]</scope>
    <source>
        <strain>ATCC 17483 / DSM 6506 / JCM 6159 / NCIMB 10529 / Stanier 109</strain>
    </source>
</reference>
<sequence>MMINTQEDKLVSAHDAEEFLRFFNCHDSALQQEATTLLTREAHLLDIQAYRTWLEHCVGSEVQYQVISRELRAASERRYKLNEAMNVYNENFQQLKVRVEHQLDSQNWSNSPKLRFTRFITNVQAAMDVNDEDLLHVRSNVVLHRARRGNQVDVFYAA</sequence>
<evidence type="ECO:0000250" key="1">
    <source>
        <dbReference type="UniProtKB" id="P0A112"/>
    </source>
</evidence>
<evidence type="ECO:0000305" key="2"/>
<name>NDOC_PSEFL</name>
<feature type="chain" id="PRO_0000085075" description="Naphthalene 1,2-dioxygenase system, small oxygenase component">
    <location>
        <begin position="1"/>
        <end position="158" status="greater than"/>
    </location>
</feature>
<feature type="non-terminal residue">
    <location>
        <position position="158"/>
    </location>
</feature>
<proteinExistence type="inferred from homology"/>
<dbReference type="EMBL" id="AF004283">
    <property type="protein sequence ID" value="AAB61371.1"/>
    <property type="molecule type" value="Genomic_DNA"/>
</dbReference>
<dbReference type="SMR" id="O07825"/>
<dbReference type="UniPathway" id="UPA00082"/>
<dbReference type="GO" id="GO:0051213">
    <property type="term" value="F:dioxygenase activity"/>
    <property type="evidence" value="ECO:0007669"/>
    <property type="project" value="UniProtKB-KW"/>
</dbReference>
<dbReference type="GO" id="GO:0019380">
    <property type="term" value="P:3-phenylpropionate catabolic process"/>
    <property type="evidence" value="ECO:0007669"/>
    <property type="project" value="TreeGrafter"/>
</dbReference>
<dbReference type="CDD" id="cd00667">
    <property type="entry name" value="ring_hydroxylating_dioxygenases_beta"/>
    <property type="match status" value="1"/>
</dbReference>
<dbReference type="Gene3D" id="3.10.450.50">
    <property type="match status" value="1"/>
</dbReference>
<dbReference type="InterPro" id="IPR032710">
    <property type="entry name" value="NTF2-like_dom_sf"/>
</dbReference>
<dbReference type="InterPro" id="IPR000391">
    <property type="entry name" value="Rng_hydr_dOase-bsu"/>
</dbReference>
<dbReference type="PANTHER" id="PTHR41534:SF2">
    <property type="entry name" value="3-PHENYLPROPIONATE_CINNAMIC ACID DIOXYGENASE SUBUNIT BETA"/>
    <property type="match status" value="1"/>
</dbReference>
<dbReference type="PANTHER" id="PTHR41534">
    <property type="entry name" value="BLR3401 PROTEIN"/>
    <property type="match status" value="1"/>
</dbReference>
<dbReference type="Pfam" id="PF00866">
    <property type="entry name" value="Ring_hydroxyl_B"/>
    <property type="match status" value="1"/>
</dbReference>
<dbReference type="SUPFAM" id="SSF54427">
    <property type="entry name" value="NTF2-like"/>
    <property type="match status" value="1"/>
</dbReference>
<geneLocation type="plasmid"/>
<accession>O07825</accession>
<organism>
    <name type="scientific">Pseudomonas fluorescens</name>
    <dbReference type="NCBI Taxonomy" id="294"/>
    <lineage>
        <taxon>Bacteria</taxon>
        <taxon>Pseudomonadati</taxon>
        <taxon>Pseudomonadota</taxon>
        <taxon>Gammaproteobacteria</taxon>
        <taxon>Pseudomonadales</taxon>
        <taxon>Pseudomonadaceae</taxon>
        <taxon>Pseudomonas</taxon>
    </lineage>
</organism>
<comment type="function">
    <text evidence="1">Component of the naphthalene dioxygenase (NDO) multicomponent enzyme system which catalyzes the incorporation of both atoms of molecular oxygen into naphthalene to form cis-(1R,2S)-dihydroxy-1,2-dihydronaphthalene. The beta subunit seems to have a structural role in the holoenzyme.</text>
</comment>
<comment type="pathway">
    <text evidence="1">Aromatic compound metabolism; naphthalene degradation.</text>
</comment>
<comment type="subunit">
    <text evidence="1">The naphthalene dioxygenase (NDO) multicomponent enzyme system is composed of an electron transfer component and a dioxygenase component (iron sulfur protein (ISP)). The electron transfer component is composed of a ferredoxin reductase (NdoR) and a ferredoxin (NdoA), and the dioxygenase component is formed of a heterohexamer (trimer of heterodimers) of three large alpha subunits (NdoB) and three small beta subunits (NdoC).</text>
</comment>
<comment type="similarity">
    <text evidence="2">Belongs to the bacterial ring-hydroxylating dioxygenase beta subunit family.</text>
</comment>
<protein>
    <recommendedName>
        <fullName evidence="1">Naphthalene 1,2-dioxygenase system, small oxygenase component</fullName>
    </recommendedName>
    <alternativeName>
        <fullName evidence="1">Naphthalene 1,2-dioxygenase ISP beta</fullName>
    </alternativeName>
    <alternativeName>
        <fullName evidence="1">Naphthalene 1,2-dioxygenase subunit beta</fullName>
        <shortName evidence="1">ND subunit beta</shortName>
        <shortName evidence="1">NDO subunit beta</shortName>
    </alternativeName>
</protein>